<sequence length="380" mass="43105">MTEFTKLRWLLSAAGLVMYVADVCTDAALVLTYFKEKHVVCAALTLLFIVVGLLVTQVFSTAWYWDDMDCDEKREDMKTTLPVVSKRGLATLHLFGVGIFIRYYQMLKRGFGVAWGTVEPVEEIKNQQHFLFGLAADLSMLRLLEAFLESVPQLLLQLYIVLGQQECSLVQLVGMSFSFMNAAWALVDYRRCLRRSLPDVRQMPRGLPTAIYLLYKLFTITSRVLGYALLLIFSIYSTVGLAIVWLLGTAWTHRLHTDFCSSQSLEFLYRAIVGVILTFTFFNVKGQGTRDAMITYYFLHSLINVLSLLLLFVLRPDLLTLAALLCVSTLMAACSVLGLVCLVLYYLLLHPTEACREADEVDGLEIKTRSKGRLRDFLYP</sequence>
<proteinExistence type="evidence at transcript level"/>
<accession>Q49LS6</accession>
<accession>Q4SMU6</accession>
<comment type="function">
    <text evidence="1">Phospholipid scramblase that promotes phosphatidylserine exposure on apoptotic cell surface. Phosphatidylserine is a specific marker only present at the surface of apoptotic cells and acts as a specific signal for engulfment.</text>
</comment>
<comment type="catalytic activity">
    <reaction evidence="1">
        <text>a 1,2-diacyl-sn-glycero-3-phospho-L-serine(in) = a 1,2-diacyl-sn-glycero-3-phospho-L-serine(out)</text>
        <dbReference type="Rhea" id="RHEA:38663"/>
        <dbReference type="ChEBI" id="CHEBI:57262"/>
    </reaction>
</comment>
<comment type="subcellular location">
    <subcellularLocation>
        <location evidence="1">Cell membrane</location>
        <topology evidence="3">Multi-pass membrane protein</topology>
    </subcellularLocation>
</comment>
<comment type="similarity">
    <text evidence="6">Belongs to the XK family.</text>
</comment>
<comment type="sequence caution" evidence="6">
    <conflict type="erroneous gene model prediction">
        <sequence resource="EMBL-CDS" id="CAF98036"/>
    </conflict>
</comment>
<gene>
    <name evidence="2" type="primary">xkr9</name>
    <name evidence="5" type="synonym">xrg9</name>
    <name evidence="4" type="ORF">GSTENG00015586001</name>
</gene>
<keyword id="KW-1003">Cell membrane</keyword>
<keyword id="KW-0472">Membrane</keyword>
<keyword id="KW-1185">Reference proteome</keyword>
<keyword id="KW-0812">Transmembrane</keyword>
<keyword id="KW-1133">Transmembrane helix</keyword>
<protein>
    <recommendedName>
        <fullName evidence="6">XK-related protein 9</fullName>
    </recommendedName>
</protein>
<reference key="1">
    <citation type="submission" date="2004-07" db="EMBL/GenBank/DDBJ databases">
        <title>A superfamily of XK-related genes (XRG) widely expressed in vertebrates and invertebrates.</title>
        <authorList>
            <person name="Huang C.-H."/>
            <person name="Chen Y."/>
        </authorList>
    </citation>
    <scope>NUCLEOTIDE SEQUENCE [MRNA]</scope>
</reference>
<reference key="2">
    <citation type="journal article" date="2004" name="Nature">
        <title>Genome duplication in the teleost fish Tetraodon nigroviridis reveals the early vertebrate proto-karyotype.</title>
        <authorList>
            <person name="Jaillon O."/>
            <person name="Aury J.-M."/>
            <person name="Brunet F."/>
            <person name="Petit J.-L."/>
            <person name="Stange-Thomann N."/>
            <person name="Mauceli E."/>
            <person name="Bouneau L."/>
            <person name="Fischer C."/>
            <person name="Ozouf-Costaz C."/>
            <person name="Bernot A."/>
            <person name="Nicaud S."/>
            <person name="Jaffe D."/>
            <person name="Fisher S."/>
            <person name="Lutfalla G."/>
            <person name="Dossat C."/>
            <person name="Segurens B."/>
            <person name="Dasilva C."/>
            <person name="Salanoubat M."/>
            <person name="Levy M."/>
            <person name="Boudet N."/>
            <person name="Castellano S."/>
            <person name="Anthouard V."/>
            <person name="Jubin C."/>
            <person name="Castelli V."/>
            <person name="Katinka M."/>
            <person name="Vacherie B."/>
            <person name="Biemont C."/>
            <person name="Skalli Z."/>
            <person name="Cattolico L."/>
            <person name="Poulain J."/>
            <person name="De Berardinis V."/>
            <person name="Cruaud C."/>
            <person name="Duprat S."/>
            <person name="Brottier P."/>
            <person name="Coutanceau J.-P."/>
            <person name="Gouzy J."/>
            <person name="Parra G."/>
            <person name="Lardier G."/>
            <person name="Chapple C."/>
            <person name="McKernan K.J."/>
            <person name="McEwan P."/>
            <person name="Bosak S."/>
            <person name="Kellis M."/>
            <person name="Volff J.-N."/>
            <person name="Guigo R."/>
            <person name="Zody M.C."/>
            <person name="Mesirov J."/>
            <person name="Lindblad-Toh K."/>
            <person name="Birren B."/>
            <person name="Nusbaum C."/>
            <person name="Kahn D."/>
            <person name="Robinson-Rechavi M."/>
            <person name="Laudet V."/>
            <person name="Schachter V."/>
            <person name="Quetier F."/>
            <person name="Saurin W."/>
            <person name="Scarpelli C."/>
            <person name="Wincker P."/>
            <person name="Lander E.S."/>
            <person name="Weissenbach J."/>
            <person name="Roest Crollius H."/>
        </authorList>
    </citation>
    <scope>NUCLEOTIDE SEQUENCE [LARGE SCALE GENOMIC DNA]</scope>
</reference>
<feature type="chain" id="PRO_0000190799" description="XK-related protein 9">
    <location>
        <begin position="1"/>
        <end position="380"/>
    </location>
</feature>
<feature type="transmembrane region" description="Helical" evidence="3">
    <location>
        <begin position="10"/>
        <end position="30"/>
    </location>
</feature>
<feature type="transmembrane region" description="Helical" evidence="3">
    <location>
        <begin position="39"/>
        <end position="59"/>
    </location>
</feature>
<feature type="transmembrane region" description="Helical" evidence="3">
    <location>
        <begin position="81"/>
        <end position="101"/>
    </location>
</feature>
<feature type="transmembrane region" description="Helical" evidence="3">
    <location>
        <begin position="167"/>
        <end position="187"/>
    </location>
</feature>
<feature type="transmembrane region" description="Helical" evidence="3">
    <location>
        <begin position="228"/>
        <end position="248"/>
    </location>
</feature>
<feature type="transmembrane region" description="Helical" evidence="3">
    <location>
        <begin position="264"/>
        <end position="284"/>
    </location>
</feature>
<feature type="transmembrane region" description="Helical" evidence="3">
    <location>
        <begin position="294"/>
        <end position="314"/>
    </location>
</feature>
<feature type="transmembrane region" description="Helical" evidence="3">
    <location>
        <begin position="329"/>
        <end position="349"/>
    </location>
</feature>
<organism>
    <name type="scientific">Tetraodon nigroviridis</name>
    <name type="common">Spotted green pufferfish</name>
    <name type="synonym">Chelonodon nigroviridis</name>
    <dbReference type="NCBI Taxonomy" id="99883"/>
    <lineage>
        <taxon>Eukaryota</taxon>
        <taxon>Metazoa</taxon>
        <taxon>Chordata</taxon>
        <taxon>Craniata</taxon>
        <taxon>Vertebrata</taxon>
        <taxon>Euteleostomi</taxon>
        <taxon>Actinopterygii</taxon>
        <taxon>Neopterygii</taxon>
        <taxon>Teleostei</taxon>
        <taxon>Neoteleostei</taxon>
        <taxon>Acanthomorphata</taxon>
        <taxon>Eupercaria</taxon>
        <taxon>Tetraodontiformes</taxon>
        <taxon>Tetradontoidea</taxon>
        <taxon>Tetraodontidae</taxon>
        <taxon>Tetraodon</taxon>
    </lineage>
</organism>
<dbReference type="EMBL" id="AY702903">
    <property type="protein sequence ID" value="AAU94456.1"/>
    <property type="molecule type" value="mRNA"/>
</dbReference>
<dbReference type="EMBL" id="CAAE01014544">
    <property type="protein sequence ID" value="CAF98036.1"/>
    <property type="status" value="ALT_SEQ"/>
    <property type="molecule type" value="Genomic_DNA"/>
</dbReference>
<dbReference type="SMR" id="Q49LS6"/>
<dbReference type="KEGG" id="tng:GSTEN00015586G001"/>
<dbReference type="HOGENOM" id="CLU_028534_2_0_1"/>
<dbReference type="InParanoid" id="Q49LS6"/>
<dbReference type="OrthoDB" id="8190653at2759"/>
<dbReference type="Proteomes" id="UP000007303">
    <property type="component" value="Unassembled WGS sequence"/>
</dbReference>
<dbReference type="GO" id="GO:0005886">
    <property type="term" value="C:plasma membrane"/>
    <property type="evidence" value="ECO:0007669"/>
    <property type="project" value="UniProtKB-SubCell"/>
</dbReference>
<dbReference type="InterPro" id="IPR018629">
    <property type="entry name" value="XK-rel"/>
</dbReference>
<dbReference type="InterPro" id="IPR050895">
    <property type="entry name" value="XK-related_scramblase"/>
</dbReference>
<dbReference type="PANTHER" id="PTHR16024">
    <property type="entry name" value="XK-RELATED PROTEIN"/>
    <property type="match status" value="1"/>
</dbReference>
<dbReference type="PANTHER" id="PTHR16024:SF13">
    <property type="entry name" value="XK-RELATED PROTEIN 9"/>
    <property type="match status" value="1"/>
</dbReference>
<dbReference type="Pfam" id="PF09815">
    <property type="entry name" value="XK-related"/>
    <property type="match status" value="1"/>
</dbReference>
<evidence type="ECO:0000250" key="1">
    <source>
        <dbReference type="UniProtKB" id="Q5GH62"/>
    </source>
</evidence>
<evidence type="ECO:0000250" key="2">
    <source>
        <dbReference type="UniProtKB" id="Q5GH70"/>
    </source>
</evidence>
<evidence type="ECO:0000255" key="3"/>
<evidence type="ECO:0000303" key="4">
    <source>
    </source>
</evidence>
<evidence type="ECO:0000303" key="5">
    <source ref="1"/>
</evidence>
<evidence type="ECO:0000305" key="6"/>
<name>XKR9_TETNG</name>